<dbReference type="EMBL" id="AR584832">
    <property type="status" value="NOT_ANNOTATED_CDS"/>
    <property type="molecule type" value="Genomic_DNA"/>
</dbReference>
<dbReference type="GO" id="GO:0005576">
    <property type="term" value="C:extracellular region"/>
    <property type="evidence" value="ECO:0007669"/>
    <property type="project" value="UniProtKB-SubCell"/>
</dbReference>
<dbReference type="GO" id="GO:0035792">
    <property type="term" value="C:host cell postsynaptic membrane"/>
    <property type="evidence" value="ECO:0007669"/>
    <property type="project" value="UniProtKB-KW"/>
</dbReference>
<dbReference type="GO" id="GO:0030550">
    <property type="term" value="F:acetylcholine receptor inhibitor activity"/>
    <property type="evidence" value="ECO:0007669"/>
    <property type="project" value="UniProtKB-KW"/>
</dbReference>
<dbReference type="GO" id="GO:0090729">
    <property type="term" value="F:toxin activity"/>
    <property type="evidence" value="ECO:0007669"/>
    <property type="project" value="UniProtKB-KW"/>
</dbReference>
<dbReference type="InterPro" id="IPR009958">
    <property type="entry name" value="Conotoxin_a-typ"/>
</dbReference>
<dbReference type="Pfam" id="PF07365">
    <property type="entry name" value="Toxin_8"/>
    <property type="match status" value="1"/>
</dbReference>
<reference key="1">
    <citation type="patent" date="2004-09-28" number="US6797808">
        <title>Alpha-conotoxin peptides.</title>
        <authorList>
            <person name="Watkins M."/>
            <person name="Olivera B.M."/>
            <person name="Hillyard D.R."/>
            <person name="McIntosh J.M."/>
            <person name="Jones R.M."/>
        </authorList>
    </citation>
    <scope>NUCLEOTIDE SEQUENCE [GENOMIC DNA]</scope>
</reference>
<feature type="signal peptide" evidence="3">
    <location>
        <begin position="1"/>
        <end position="16"/>
    </location>
</feature>
<feature type="propeptide" id="PRO_0000445058" evidence="5">
    <location>
        <begin position="17"/>
        <end position="42"/>
    </location>
</feature>
<feature type="peptide" id="PRO_0000445059" description="Alpha-conotoxin-like Sm1.2" evidence="5">
    <location>
        <begin position="43"/>
        <end position="56"/>
    </location>
</feature>
<feature type="region of interest" description="Disordered" evidence="4">
    <location>
        <begin position="17"/>
        <end position="46"/>
    </location>
</feature>
<feature type="compositionally biased region" description="Basic and acidic residues" evidence="4">
    <location>
        <begin position="19"/>
        <end position="41"/>
    </location>
</feature>
<feature type="modified residue" description="Cysteine amide" evidence="5">
    <location>
        <position position="56"/>
    </location>
</feature>
<feature type="disulfide bond" evidence="2">
    <location>
        <begin position="45"/>
        <end position="51"/>
    </location>
</feature>
<feature type="disulfide bond" evidence="2">
    <location>
        <begin position="46"/>
        <end position="56"/>
    </location>
</feature>
<keyword id="KW-0008">Acetylcholine receptor inhibiting toxin</keyword>
<keyword id="KW-0027">Amidation</keyword>
<keyword id="KW-1015">Disulfide bond</keyword>
<keyword id="KW-0528">Neurotoxin</keyword>
<keyword id="KW-0629">Postsynaptic neurotoxin</keyword>
<keyword id="KW-0964">Secreted</keyword>
<keyword id="KW-0732">Signal</keyword>
<keyword id="KW-0800">Toxin</keyword>
<name>CA12_CONSE</name>
<protein>
    <recommendedName>
        <fullName evidence="5">Alpha-conotoxin-like Sm1.2</fullName>
    </recommendedName>
</protein>
<evidence type="ECO:0000250" key="1"/>
<evidence type="ECO:0000250" key="2">
    <source>
        <dbReference type="UniProtKB" id="P01519"/>
    </source>
</evidence>
<evidence type="ECO:0000255" key="3"/>
<evidence type="ECO:0000256" key="4">
    <source>
        <dbReference type="SAM" id="MobiDB-lite"/>
    </source>
</evidence>
<evidence type="ECO:0000305" key="5"/>
<proteinExistence type="inferred from homology"/>
<comment type="function">
    <text evidence="1">Alpha-conotoxins act on postsynaptic membranes, they bind to the nicotinic acetylcholine receptors (nAChR) and thus inhibit them.</text>
</comment>
<comment type="subcellular location">
    <subcellularLocation>
        <location evidence="5">Secreted</location>
    </subcellularLocation>
</comment>
<comment type="tissue specificity">
    <text evidence="5">Expressed by the venom duct.</text>
</comment>
<comment type="domain">
    <text evidence="5">The cysteine framework is I (CC-C-C). Alpha3/5 pattern.</text>
</comment>
<comment type="similarity">
    <text evidence="5">Belongs to the conotoxin A superfamily.</text>
</comment>
<accession>P0DPM0</accession>
<organism>
    <name type="scientific">Conus stercusmuscarum</name>
    <name type="common">Fly-specked cone</name>
    <dbReference type="NCBI Taxonomy" id="89452"/>
    <lineage>
        <taxon>Eukaryota</taxon>
        <taxon>Metazoa</taxon>
        <taxon>Spiralia</taxon>
        <taxon>Lophotrochozoa</taxon>
        <taxon>Mollusca</taxon>
        <taxon>Gastropoda</taxon>
        <taxon>Caenogastropoda</taxon>
        <taxon>Neogastropoda</taxon>
        <taxon>Conoidea</taxon>
        <taxon>Conidae</taxon>
        <taxon>Conus</taxon>
        <taxon>Pionoconus</taxon>
    </lineage>
</organism>
<sequence>MFTVFLLVVLATTVVSFPSDRESDGANDEARTDEPEEHGPDRNGCCRNPACESHRCG</sequence>